<sequence>MAKDILIHQIIEVLERAGFMVSNQCNIRPRSFDLAARQGNTLLFCKVLYNIDGLNEETAREMKSLAKYLNGYPILIGAKTRDQLLEDSVVYMRYDIPALSIQTLYDYFVENVPPLVSAAPGGLYVSIDGDVLKEARMNVSMSLGALASELGVSRRTISKYEEGQMDASIDIVLHLEEILDMALAKSIDILRSFEKELDPANVKEEAHEMKTPPNDNILNLIYTLGYDVLSTNQAPFKAVSKDTSSTFLTGVSEYSNAMVKRAHLMSSISNVIETQSVFIIEGKSRYKFVEDTVLIERDELNTIADSDDLDTLIHERAKRHKEE</sequence>
<name>Y1811_METBU</name>
<reference key="1">
    <citation type="journal article" date="2009" name="ISME J.">
        <title>The genome sequence of the psychrophilic archaeon, Methanococcoides burtonii: the role of genome evolution in cold adaptation.</title>
        <authorList>
            <person name="Allen M.A."/>
            <person name="Lauro F.M."/>
            <person name="Williams T.J."/>
            <person name="Burg D."/>
            <person name="Siddiqui K.S."/>
            <person name="De Francisci D."/>
            <person name="Chong K.W."/>
            <person name="Pilak O."/>
            <person name="Chew H.H."/>
            <person name="De Maere M.Z."/>
            <person name="Ting L."/>
            <person name="Katrib M."/>
            <person name="Ng C."/>
            <person name="Sowers K.R."/>
            <person name="Galperin M.Y."/>
            <person name="Anderson I.J."/>
            <person name="Ivanova N."/>
            <person name="Dalin E."/>
            <person name="Martinez M."/>
            <person name="Lapidus A."/>
            <person name="Hauser L."/>
            <person name="Land M."/>
            <person name="Thomas T."/>
            <person name="Cavicchioli R."/>
        </authorList>
    </citation>
    <scope>NUCLEOTIDE SEQUENCE [LARGE SCALE GENOMIC DNA]</scope>
    <source>
        <strain>DSM 6242 / NBRC 107633 / OCM 468 / ACE-M</strain>
    </source>
</reference>
<gene>
    <name type="ordered locus">Mbur_1811</name>
</gene>
<organism>
    <name type="scientific">Methanococcoides burtonii (strain DSM 6242 / NBRC 107633 / OCM 468 / ACE-M)</name>
    <dbReference type="NCBI Taxonomy" id="259564"/>
    <lineage>
        <taxon>Archaea</taxon>
        <taxon>Methanobacteriati</taxon>
        <taxon>Methanobacteriota</taxon>
        <taxon>Stenosarchaea group</taxon>
        <taxon>Methanomicrobia</taxon>
        <taxon>Methanosarcinales</taxon>
        <taxon>Methanosarcinaceae</taxon>
        <taxon>Methanococcoides</taxon>
    </lineage>
</organism>
<evidence type="ECO:0000255" key="1">
    <source>
        <dbReference type="HAMAP-Rule" id="MF_00584"/>
    </source>
</evidence>
<keyword id="KW-0238">DNA-binding</keyword>
<keyword id="KW-0804">Transcription</keyword>
<keyword id="KW-0805">Transcription regulation</keyword>
<accession>Q12V29</accession>
<proteinExistence type="inferred from homology"/>
<feature type="chain" id="PRO_0000259357" description="Putative HTH-type transcriptional regulatory protein Mbur_1811">
    <location>
        <begin position="1"/>
        <end position="323"/>
    </location>
</feature>
<feature type="domain" description="HTH cro/C1-type" evidence="1">
    <location>
        <begin position="132"/>
        <end position="190"/>
    </location>
</feature>
<feature type="DNA-binding region" description="H-T-H motif" evidence="1">
    <location>
        <begin position="143"/>
        <end position="162"/>
    </location>
</feature>
<protein>
    <recommendedName>
        <fullName evidence="1">Putative HTH-type transcriptional regulatory protein Mbur_1811</fullName>
    </recommendedName>
</protein>
<dbReference type="EMBL" id="CP000300">
    <property type="protein sequence ID" value="ABE52697.1"/>
    <property type="molecule type" value="Genomic_DNA"/>
</dbReference>
<dbReference type="RefSeq" id="WP_011499840.1">
    <property type="nucleotide sequence ID" value="NC_007955.1"/>
</dbReference>
<dbReference type="SMR" id="Q12V29"/>
<dbReference type="STRING" id="259564.Mbur_1811"/>
<dbReference type="GeneID" id="3997938"/>
<dbReference type="KEGG" id="mbu:Mbur_1811"/>
<dbReference type="HOGENOM" id="CLU_075726_0_0_2"/>
<dbReference type="OrthoDB" id="31424at2157"/>
<dbReference type="Proteomes" id="UP000001979">
    <property type="component" value="Chromosome"/>
</dbReference>
<dbReference type="GO" id="GO:0003677">
    <property type="term" value="F:DNA binding"/>
    <property type="evidence" value="ECO:0007669"/>
    <property type="project" value="UniProtKB-KW"/>
</dbReference>
<dbReference type="GO" id="GO:0003700">
    <property type="term" value="F:DNA-binding transcription factor activity"/>
    <property type="evidence" value="ECO:0007669"/>
    <property type="project" value="UniProtKB-UniRule"/>
</dbReference>
<dbReference type="CDD" id="cd00093">
    <property type="entry name" value="HTH_XRE"/>
    <property type="match status" value="1"/>
</dbReference>
<dbReference type="Gene3D" id="1.10.260.40">
    <property type="entry name" value="lambda repressor-like DNA-binding domains"/>
    <property type="match status" value="1"/>
</dbReference>
<dbReference type="HAMAP" id="MF_00584">
    <property type="entry name" value="HTH_type_cro_C1"/>
    <property type="match status" value="1"/>
</dbReference>
<dbReference type="InterPro" id="IPR020886">
    <property type="entry name" value="Arc_TR_HTH"/>
</dbReference>
<dbReference type="InterPro" id="IPR001387">
    <property type="entry name" value="Cro/C1-type_HTH"/>
</dbReference>
<dbReference type="InterPro" id="IPR010982">
    <property type="entry name" value="Lambda_DNA-bd_dom_sf"/>
</dbReference>
<dbReference type="NCBIfam" id="NF003162">
    <property type="entry name" value="PRK04140.1"/>
    <property type="match status" value="1"/>
</dbReference>
<dbReference type="Pfam" id="PF01381">
    <property type="entry name" value="HTH_3"/>
    <property type="match status" value="1"/>
</dbReference>
<dbReference type="SMART" id="SM00530">
    <property type="entry name" value="HTH_XRE"/>
    <property type="match status" value="1"/>
</dbReference>
<dbReference type="SUPFAM" id="SSF47413">
    <property type="entry name" value="lambda repressor-like DNA-binding domains"/>
    <property type="match status" value="1"/>
</dbReference>
<dbReference type="PROSITE" id="PS50943">
    <property type="entry name" value="HTH_CROC1"/>
    <property type="match status" value="1"/>
</dbReference>